<protein>
    <recommendedName>
        <fullName evidence="1">1,4-alpha-glucan branching enzyme GlgB 1</fullName>
        <ecNumber evidence="1">2.4.1.18</ecNumber>
    </recommendedName>
    <alternativeName>
        <fullName evidence="1">1,4-alpha-D-glucan:1,4-alpha-D-glucan 6-glucosyl-transferase 1</fullName>
    </alternativeName>
    <alternativeName>
        <fullName evidence="1">Alpha-(1-&gt;4)-glucan branching enzyme 1</fullName>
    </alternativeName>
    <alternativeName>
        <fullName evidence="1">Glycogen branching enzyme 1</fullName>
        <shortName evidence="1">BE 1</shortName>
    </alternativeName>
</protein>
<comment type="function">
    <text evidence="1">Catalyzes the formation of the alpha-1,6-glucosidic linkages in glycogen by scission of a 1,4-alpha-linked oligosaccharide from growing alpha-1,4-glucan chains and the subsequent attachment of the oligosaccharide to the alpha-1,6 position.</text>
</comment>
<comment type="catalytic activity">
    <reaction evidence="1">
        <text>Transfers a segment of a (1-&gt;4)-alpha-D-glucan chain to a primary hydroxy group in a similar glucan chain.</text>
        <dbReference type="EC" id="2.4.1.18"/>
    </reaction>
</comment>
<comment type="pathway">
    <text evidence="1">Glycan biosynthesis; glycogen biosynthesis.</text>
</comment>
<comment type="subunit">
    <text evidence="1">Monomer.</text>
</comment>
<comment type="similarity">
    <text evidence="1">Belongs to the glycosyl hydrolase 13 family. GlgB subfamily.</text>
</comment>
<name>GLGB1_CLOPS</name>
<reference key="1">
    <citation type="journal article" date="2006" name="Genome Res.">
        <title>Skewed genomic variability in strains of the toxigenic bacterial pathogen, Clostridium perfringens.</title>
        <authorList>
            <person name="Myers G.S.A."/>
            <person name="Rasko D.A."/>
            <person name="Cheung J.K."/>
            <person name="Ravel J."/>
            <person name="Seshadri R."/>
            <person name="DeBoy R.T."/>
            <person name="Ren Q."/>
            <person name="Varga J."/>
            <person name="Awad M.M."/>
            <person name="Brinkac L.M."/>
            <person name="Daugherty S.C."/>
            <person name="Haft D.H."/>
            <person name="Dodson R.J."/>
            <person name="Madupu R."/>
            <person name="Nelson W.C."/>
            <person name="Rosovitz M.J."/>
            <person name="Sullivan S.A."/>
            <person name="Khouri H."/>
            <person name="Dimitrov G.I."/>
            <person name="Watkins K.L."/>
            <person name="Mulligan S."/>
            <person name="Benton J."/>
            <person name="Radune D."/>
            <person name="Fisher D.J."/>
            <person name="Atkins H.S."/>
            <person name="Hiscox T."/>
            <person name="Jost B.H."/>
            <person name="Billington S.J."/>
            <person name="Songer J.G."/>
            <person name="McClane B.A."/>
            <person name="Titball R.W."/>
            <person name="Rood J.I."/>
            <person name="Melville S.B."/>
            <person name="Paulsen I.T."/>
        </authorList>
    </citation>
    <scope>NUCLEOTIDE SEQUENCE [LARGE SCALE GENOMIC DNA]</scope>
    <source>
        <strain>SM101 / Type A</strain>
    </source>
</reference>
<feature type="chain" id="PRO_0000260646" description="1,4-alpha-glucan branching enzyme GlgB 1">
    <location>
        <begin position="1"/>
        <end position="674"/>
    </location>
</feature>
<feature type="active site" description="Nucleophile" evidence="1">
    <location>
        <position position="336"/>
    </location>
</feature>
<feature type="active site" description="Proton donor" evidence="1">
    <location>
        <position position="389"/>
    </location>
</feature>
<accession>Q0SWZ1</accession>
<evidence type="ECO:0000255" key="1">
    <source>
        <dbReference type="HAMAP-Rule" id="MF_00685"/>
    </source>
</evidence>
<organism>
    <name type="scientific">Clostridium perfringens (strain SM101 / Type A)</name>
    <dbReference type="NCBI Taxonomy" id="289380"/>
    <lineage>
        <taxon>Bacteria</taxon>
        <taxon>Bacillati</taxon>
        <taxon>Bacillota</taxon>
        <taxon>Clostridia</taxon>
        <taxon>Eubacteriales</taxon>
        <taxon>Clostridiaceae</taxon>
        <taxon>Clostridium</taxon>
    </lineage>
</organism>
<dbReference type="EC" id="2.4.1.18" evidence="1"/>
<dbReference type="EMBL" id="CP000312">
    <property type="protein sequence ID" value="ABG86142.1"/>
    <property type="molecule type" value="Genomic_DNA"/>
</dbReference>
<dbReference type="RefSeq" id="WP_011591248.1">
    <property type="nucleotide sequence ID" value="NC_008262.1"/>
</dbReference>
<dbReference type="SMR" id="Q0SWZ1"/>
<dbReference type="CAZy" id="CBM48">
    <property type="family name" value="Carbohydrate-Binding Module Family 48"/>
</dbReference>
<dbReference type="CAZy" id="GH13">
    <property type="family name" value="Glycoside Hydrolase Family 13"/>
</dbReference>
<dbReference type="KEGG" id="cpr:CPR_0081"/>
<dbReference type="UniPathway" id="UPA00164"/>
<dbReference type="Proteomes" id="UP000001824">
    <property type="component" value="Chromosome"/>
</dbReference>
<dbReference type="GO" id="GO:0005829">
    <property type="term" value="C:cytosol"/>
    <property type="evidence" value="ECO:0007669"/>
    <property type="project" value="TreeGrafter"/>
</dbReference>
<dbReference type="GO" id="GO:0003844">
    <property type="term" value="F:1,4-alpha-glucan branching enzyme activity"/>
    <property type="evidence" value="ECO:0007669"/>
    <property type="project" value="UniProtKB-UniRule"/>
</dbReference>
<dbReference type="GO" id="GO:0043169">
    <property type="term" value="F:cation binding"/>
    <property type="evidence" value="ECO:0007669"/>
    <property type="project" value="InterPro"/>
</dbReference>
<dbReference type="GO" id="GO:0004553">
    <property type="term" value="F:hydrolase activity, hydrolyzing O-glycosyl compounds"/>
    <property type="evidence" value="ECO:0007669"/>
    <property type="project" value="InterPro"/>
</dbReference>
<dbReference type="GO" id="GO:0005978">
    <property type="term" value="P:glycogen biosynthetic process"/>
    <property type="evidence" value="ECO:0007669"/>
    <property type="project" value="UniProtKB-UniRule"/>
</dbReference>
<dbReference type="CDD" id="cd11322">
    <property type="entry name" value="AmyAc_Glg_BE"/>
    <property type="match status" value="1"/>
</dbReference>
<dbReference type="CDD" id="cd02855">
    <property type="entry name" value="E_set_GBE_prok_N"/>
    <property type="match status" value="1"/>
</dbReference>
<dbReference type="FunFam" id="2.60.40.1180:FF:000002">
    <property type="entry name" value="1,4-alpha-glucan branching enzyme GlgB"/>
    <property type="match status" value="1"/>
</dbReference>
<dbReference type="FunFam" id="3.20.20.80:FF:000003">
    <property type="entry name" value="1,4-alpha-glucan branching enzyme GlgB"/>
    <property type="match status" value="1"/>
</dbReference>
<dbReference type="Gene3D" id="3.20.20.80">
    <property type="entry name" value="Glycosidases"/>
    <property type="match status" value="1"/>
</dbReference>
<dbReference type="Gene3D" id="2.60.40.1180">
    <property type="entry name" value="Golgi alpha-mannosidase II"/>
    <property type="match status" value="1"/>
</dbReference>
<dbReference type="Gene3D" id="2.60.40.10">
    <property type="entry name" value="Immunoglobulins"/>
    <property type="match status" value="1"/>
</dbReference>
<dbReference type="HAMAP" id="MF_00685">
    <property type="entry name" value="GlgB"/>
    <property type="match status" value="1"/>
</dbReference>
<dbReference type="InterPro" id="IPR006048">
    <property type="entry name" value="A-amylase/branching_C"/>
</dbReference>
<dbReference type="InterPro" id="IPR037439">
    <property type="entry name" value="Branching_enzy"/>
</dbReference>
<dbReference type="InterPro" id="IPR006407">
    <property type="entry name" value="GlgB"/>
</dbReference>
<dbReference type="InterPro" id="IPR044143">
    <property type="entry name" value="GlgB_N_E_set_prok"/>
</dbReference>
<dbReference type="InterPro" id="IPR006047">
    <property type="entry name" value="Glyco_hydro_13_cat_dom"/>
</dbReference>
<dbReference type="InterPro" id="IPR004193">
    <property type="entry name" value="Glyco_hydro_13_N"/>
</dbReference>
<dbReference type="InterPro" id="IPR013780">
    <property type="entry name" value="Glyco_hydro_b"/>
</dbReference>
<dbReference type="InterPro" id="IPR017853">
    <property type="entry name" value="Glycoside_hydrolase_SF"/>
</dbReference>
<dbReference type="InterPro" id="IPR013783">
    <property type="entry name" value="Ig-like_fold"/>
</dbReference>
<dbReference type="InterPro" id="IPR014756">
    <property type="entry name" value="Ig_E-set"/>
</dbReference>
<dbReference type="NCBIfam" id="TIGR01515">
    <property type="entry name" value="branching_enzym"/>
    <property type="match status" value="1"/>
</dbReference>
<dbReference type="NCBIfam" id="NF003811">
    <property type="entry name" value="PRK05402.1"/>
    <property type="match status" value="1"/>
</dbReference>
<dbReference type="NCBIfam" id="NF008967">
    <property type="entry name" value="PRK12313.1"/>
    <property type="match status" value="1"/>
</dbReference>
<dbReference type="PANTHER" id="PTHR43651">
    <property type="entry name" value="1,4-ALPHA-GLUCAN-BRANCHING ENZYME"/>
    <property type="match status" value="1"/>
</dbReference>
<dbReference type="PANTHER" id="PTHR43651:SF3">
    <property type="entry name" value="1,4-ALPHA-GLUCAN-BRANCHING ENZYME"/>
    <property type="match status" value="1"/>
</dbReference>
<dbReference type="Pfam" id="PF00128">
    <property type="entry name" value="Alpha-amylase"/>
    <property type="match status" value="1"/>
</dbReference>
<dbReference type="Pfam" id="PF02806">
    <property type="entry name" value="Alpha-amylase_C"/>
    <property type="match status" value="1"/>
</dbReference>
<dbReference type="Pfam" id="PF02922">
    <property type="entry name" value="CBM_48"/>
    <property type="match status" value="1"/>
</dbReference>
<dbReference type="PIRSF" id="PIRSF000463">
    <property type="entry name" value="GlgB"/>
    <property type="match status" value="1"/>
</dbReference>
<dbReference type="SMART" id="SM00642">
    <property type="entry name" value="Aamy"/>
    <property type="match status" value="1"/>
</dbReference>
<dbReference type="SUPFAM" id="SSF51445">
    <property type="entry name" value="(Trans)glycosidases"/>
    <property type="match status" value="1"/>
</dbReference>
<dbReference type="SUPFAM" id="SSF81296">
    <property type="entry name" value="E set domains"/>
    <property type="match status" value="1"/>
</dbReference>
<dbReference type="SUPFAM" id="SSF51011">
    <property type="entry name" value="Glycosyl hydrolase domain"/>
    <property type="match status" value="1"/>
</dbReference>
<proteinExistence type="inferred from homology"/>
<keyword id="KW-0119">Carbohydrate metabolism</keyword>
<keyword id="KW-0320">Glycogen biosynthesis</keyword>
<keyword id="KW-0321">Glycogen metabolism</keyword>
<keyword id="KW-0328">Glycosyltransferase</keyword>
<keyword id="KW-0808">Transferase</keyword>
<sequence length="674" mass="80125">MTLVEVKDDKLEIKPVRLRKEKYKAQLENKIFNEDELYLFHEGRNYNAYNFMGAHFTSENRKRGVRFTLWAPRAKNIFLVGDFSNWETKEENKLNRINETGLWSIFIPRLKEGIKYKYYIEQEDGKAVLKADPYGIYSEVRPNTASILCEKTKIRWSDKKWLNKREATNYFESPINIYELHLGSWKRKDEDEFLSYDELSVVLPKYVKEMGYTHVEFMPLNEHPLDASWGYQVTGYYSVTSRYGDIKGLKRLINALHKNDIGVILDWVPGHFCKDEQGLYMFDGTPTYEYEEKWKADNKGWGTFNFDLGKPEVKSFLISNAFYFINEFHIDGLRVDAVSNMLYLNYGRNHGEWIPNIYGGNENLEAIQFIKELNEAIKTYSKGVITIAEESTSWPNVTNDTEYGGLGFDFKWNMGWMNDTLEYNELDPIYRKYHHNKLTFPMMYNHSEKFILPISHDEVVHGKKSLIDKMQGDYWNKFSNLRAYMAYMYGHPGKKLMFMGCEFGQFIEWREYEELEWKLIDKFDMHRKTHNFFKDLNNFYKNNSELWELDYDGDGFQWIDADNNEQSIYIFIRKSKNIEKYKIFVCNFTPMVYYDFNIGVPEKGVYREIFNTDKKEYGGSGQVIKGNLFSRKGWCHNQPYTLTIKVPPMAVSVFERIIEENKTEEKIVKEDKYI</sequence>
<gene>
    <name evidence="1" type="primary">glgB1</name>
    <name type="ordered locus">CPR_0081</name>
</gene>